<protein>
    <recommendedName>
        <fullName evidence="1">Peroxidase 4</fullName>
        <ecNumber>1.11.1.7</ecNumber>
    </recommendedName>
</protein>
<dbReference type="EC" id="1.11.1.7"/>
<dbReference type="GO" id="GO:0005576">
    <property type="term" value="C:extracellular region"/>
    <property type="evidence" value="ECO:0007669"/>
    <property type="project" value="UniProtKB-SubCell"/>
</dbReference>
<dbReference type="GO" id="GO:0020037">
    <property type="term" value="F:heme binding"/>
    <property type="evidence" value="ECO:0007669"/>
    <property type="project" value="InterPro"/>
</dbReference>
<dbReference type="GO" id="GO:0140825">
    <property type="term" value="F:lactoperoxidase activity"/>
    <property type="evidence" value="ECO:0007669"/>
    <property type="project" value="UniProtKB-EC"/>
</dbReference>
<dbReference type="GO" id="GO:0046872">
    <property type="term" value="F:metal ion binding"/>
    <property type="evidence" value="ECO:0007669"/>
    <property type="project" value="UniProtKB-KW"/>
</dbReference>
<dbReference type="GO" id="GO:0042744">
    <property type="term" value="P:hydrogen peroxide catabolic process"/>
    <property type="evidence" value="ECO:0007669"/>
    <property type="project" value="UniProtKB-KW"/>
</dbReference>
<dbReference type="GO" id="GO:0006979">
    <property type="term" value="P:response to oxidative stress"/>
    <property type="evidence" value="ECO:0007669"/>
    <property type="project" value="InterPro"/>
</dbReference>
<dbReference type="InterPro" id="IPR010255">
    <property type="entry name" value="Haem_peroxidase_sf"/>
</dbReference>
<dbReference type="InterPro" id="IPR019793">
    <property type="entry name" value="Peroxidases_heam-ligand_BS"/>
</dbReference>
<dbReference type="SUPFAM" id="SSF48113">
    <property type="entry name" value="Heme-dependent peroxidases"/>
    <property type="match status" value="1"/>
</dbReference>
<dbReference type="PROSITE" id="PS00435">
    <property type="entry name" value="PEROXIDASE_1"/>
    <property type="match status" value="1"/>
</dbReference>
<accession>P86002</accession>
<name>PER4_CAPAN</name>
<sequence length="15" mass="1557">EMVALSGSHTIGQAR</sequence>
<keyword id="KW-0106">Calcium</keyword>
<keyword id="KW-0903">Direct protein sequencing</keyword>
<keyword id="KW-0349">Heme</keyword>
<keyword id="KW-0376">Hydrogen peroxide</keyword>
<keyword id="KW-0408">Iron</keyword>
<keyword id="KW-0479">Metal-binding</keyword>
<keyword id="KW-0560">Oxidoreductase</keyword>
<keyword id="KW-0575">Peroxidase</keyword>
<keyword id="KW-0964">Secreted</keyword>
<evidence type="ECO:0000250" key="1">
    <source>
        <dbReference type="UniProtKB" id="P22195"/>
    </source>
</evidence>
<evidence type="ECO:0000250" key="2">
    <source>
        <dbReference type="UniProtKB" id="P84516"/>
    </source>
</evidence>
<evidence type="ECO:0000255" key="3">
    <source>
        <dbReference type="PROSITE-ProRule" id="PRU00297"/>
    </source>
</evidence>
<evidence type="ECO:0000305" key="4"/>
<proteinExistence type="evidence at protein level"/>
<comment type="function">
    <text evidence="4">Removal of H(2)O(2), oxidation of toxic reductants, biosynthesis and degradation of lignin, suberization, auxin catabolism, response to environmental stresses such as wounding, pathogen attack and oxidative stress. These functions might be dependent on each isozyme/isoform in each plant tissue.</text>
</comment>
<comment type="catalytic activity">
    <reaction>
        <text>2 a phenolic donor + H2O2 = 2 a phenolic radical donor + 2 H2O</text>
        <dbReference type="Rhea" id="RHEA:56136"/>
        <dbReference type="ChEBI" id="CHEBI:15377"/>
        <dbReference type="ChEBI" id="CHEBI:16240"/>
        <dbReference type="ChEBI" id="CHEBI:139520"/>
        <dbReference type="ChEBI" id="CHEBI:139521"/>
        <dbReference type="EC" id="1.11.1.7"/>
    </reaction>
</comment>
<comment type="cofactor">
    <cofactor evidence="1 3">
        <name>heme b</name>
        <dbReference type="ChEBI" id="CHEBI:60344"/>
    </cofactor>
    <text evidence="1 3">Binds 1 heme b (iron(II)-protoporphyrin IX) group per subunit.</text>
</comment>
<comment type="cofactor">
    <cofactor evidence="1 3">
        <name>Ca(2+)</name>
        <dbReference type="ChEBI" id="CHEBI:29108"/>
    </cofactor>
    <text evidence="1 3">Binds 2 calcium ions per subunit.</text>
</comment>
<comment type="subcellular location">
    <subcellularLocation>
        <location evidence="2 3">Secreted</location>
    </subcellularLocation>
</comment>
<comment type="similarity">
    <text evidence="3">Belongs to the peroxidase family. Classical plant (class III) peroxidase subfamily.</text>
</comment>
<reference evidence="4" key="1">
    <citation type="submission" date="2008-07" db="UniProtKB">
        <authorList>
            <person name="Sabater Jara A.B."/>
            <person name="Almagro L."/>
            <person name="Pedreno M.A."/>
        </authorList>
    </citation>
    <scope>PROTEIN SEQUENCE</scope>
</reference>
<feature type="chain" id="PRO_0000363731" description="Peroxidase 4">
    <location>
        <begin position="1" status="less than"/>
        <end position="15" status="greater than"/>
    </location>
</feature>
<feature type="binding site" description="axial binding residue" evidence="1 3">
    <location>
        <position position="9"/>
    </location>
    <ligand>
        <name>heme</name>
        <dbReference type="ChEBI" id="CHEBI:30413"/>
    </ligand>
    <ligandPart>
        <name>Fe</name>
        <dbReference type="ChEBI" id="CHEBI:18248"/>
    </ligandPart>
</feature>
<feature type="binding site" evidence="1 3">
    <location>
        <position position="10"/>
    </location>
    <ligand>
        <name>Ca(2+)</name>
        <dbReference type="ChEBI" id="CHEBI:29108"/>
        <label>2</label>
    </ligand>
</feature>
<feature type="unsure residue" description="M or F">
    <location>
        <position position="2"/>
    </location>
</feature>
<feature type="unsure residue" description="L or I">
    <location>
        <position position="5"/>
    </location>
</feature>
<feature type="unsure residue" description="I or L">
    <location>
        <position position="11"/>
    </location>
</feature>
<feature type="unsure residue" description="Q or K">
    <location>
        <position position="13"/>
    </location>
</feature>
<feature type="non-terminal residue">
    <location>
        <position position="1"/>
    </location>
</feature>
<feature type="non-terminal residue">
    <location>
        <position position="15"/>
    </location>
</feature>
<organism>
    <name type="scientific">Capsicum annuum</name>
    <name type="common">Capsicum pepper</name>
    <dbReference type="NCBI Taxonomy" id="4072"/>
    <lineage>
        <taxon>Eukaryota</taxon>
        <taxon>Viridiplantae</taxon>
        <taxon>Streptophyta</taxon>
        <taxon>Embryophyta</taxon>
        <taxon>Tracheophyta</taxon>
        <taxon>Spermatophyta</taxon>
        <taxon>Magnoliopsida</taxon>
        <taxon>eudicotyledons</taxon>
        <taxon>Gunneridae</taxon>
        <taxon>Pentapetalae</taxon>
        <taxon>asterids</taxon>
        <taxon>lamiids</taxon>
        <taxon>Solanales</taxon>
        <taxon>Solanaceae</taxon>
        <taxon>Solanoideae</taxon>
        <taxon>Capsiceae</taxon>
        <taxon>Capsicum</taxon>
    </lineage>
</organism>